<evidence type="ECO:0000255" key="1">
    <source>
        <dbReference type="HAMAP-Rule" id="MF_00373"/>
    </source>
</evidence>
<evidence type="ECO:0000305" key="2"/>
<dbReference type="EMBL" id="CP001340">
    <property type="protein sequence ID" value="ACL94164.1"/>
    <property type="molecule type" value="Genomic_DNA"/>
</dbReference>
<dbReference type="RefSeq" id="WP_010918547.1">
    <property type="nucleotide sequence ID" value="NC_011916.1"/>
</dbReference>
<dbReference type="RefSeq" id="YP_002516072.1">
    <property type="nucleotide sequence ID" value="NC_011916.1"/>
</dbReference>
<dbReference type="SMR" id="B8H0R5"/>
<dbReference type="GeneID" id="7330507"/>
<dbReference type="KEGG" id="ccs:CCNA_00699"/>
<dbReference type="PATRIC" id="fig|565050.3.peg.689"/>
<dbReference type="HOGENOM" id="CLU_064548_4_2_5"/>
<dbReference type="OrthoDB" id="9805609at2"/>
<dbReference type="PhylomeDB" id="B8H0R5"/>
<dbReference type="Proteomes" id="UP000001364">
    <property type="component" value="Chromosome"/>
</dbReference>
<dbReference type="GO" id="GO:0022625">
    <property type="term" value="C:cytosolic large ribosomal subunit"/>
    <property type="evidence" value="ECO:0007669"/>
    <property type="project" value="TreeGrafter"/>
</dbReference>
<dbReference type="GO" id="GO:0003735">
    <property type="term" value="F:structural constituent of ribosome"/>
    <property type="evidence" value="ECO:0007669"/>
    <property type="project" value="InterPro"/>
</dbReference>
<dbReference type="GO" id="GO:0006412">
    <property type="term" value="P:translation"/>
    <property type="evidence" value="ECO:0007669"/>
    <property type="project" value="UniProtKB-UniRule"/>
</dbReference>
<dbReference type="Gene3D" id="2.30.170.40">
    <property type="entry name" value="Ribosomal protein L28/L24"/>
    <property type="match status" value="1"/>
</dbReference>
<dbReference type="HAMAP" id="MF_00373">
    <property type="entry name" value="Ribosomal_bL28"/>
    <property type="match status" value="1"/>
</dbReference>
<dbReference type="InterPro" id="IPR026569">
    <property type="entry name" value="Ribosomal_bL28"/>
</dbReference>
<dbReference type="InterPro" id="IPR034704">
    <property type="entry name" value="Ribosomal_bL28/bL31-like_sf"/>
</dbReference>
<dbReference type="InterPro" id="IPR001383">
    <property type="entry name" value="Ribosomal_bL28_bact-type"/>
</dbReference>
<dbReference type="InterPro" id="IPR037147">
    <property type="entry name" value="Ribosomal_bL28_sf"/>
</dbReference>
<dbReference type="NCBIfam" id="TIGR00009">
    <property type="entry name" value="L28"/>
    <property type="match status" value="1"/>
</dbReference>
<dbReference type="PANTHER" id="PTHR13528">
    <property type="entry name" value="39S RIBOSOMAL PROTEIN L28, MITOCHONDRIAL"/>
    <property type="match status" value="1"/>
</dbReference>
<dbReference type="PANTHER" id="PTHR13528:SF2">
    <property type="entry name" value="LARGE RIBOSOMAL SUBUNIT PROTEIN BL28M"/>
    <property type="match status" value="1"/>
</dbReference>
<dbReference type="Pfam" id="PF00830">
    <property type="entry name" value="Ribosomal_L28"/>
    <property type="match status" value="1"/>
</dbReference>
<dbReference type="SUPFAM" id="SSF143800">
    <property type="entry name" value="L28p-like"/>
    <property type="match status" value="1"/>
</dbReference>
<proteinExistence type="inferred from homology"/>
<accession>B8H0R5</accession>
<comment type="similarity">
    <text evidence="1">Belongs to the bacterial ribosomal protein bL28 family.</text>
</comment>
<feature type="chain" id="PRO_1000195912" description="Large ribosomal subunit protein bL28">
    <location>
        <begin position="1"/>
        <end position="99"/>
    </location>
</feature>
<gene>
    <name evidence="1" type="primary">rpmB</name>
    <name type="ordered locus">CCNA_00699</name>
</gene>
<protein>
    <recommendedName>
        <fullName evidence="1">Large ribosomal subunit protein bL28</fullName>
    </recommendedName>
    <alternativeName>
        <fullName evidence="2">50S ribosomal protein L28</fullName>
    </alternativeName>
</protein>
<sequence length="99" mass="10630">MSRRCELTGIGPMVGHNVSHSNIKTKRRFLPALSPATLQSESLGQSFKLRISNAALRTLDFKGGLDTFLLGAKDEQLSPRALKIKAQVKAKAKAAAQAA</sequence>
<reference key="1">
    <citation type="journal article" date="2010" name="J. Bacteriol.">
        <title>The genetic basis of laboratory adaptation in Caulobacter crescentus.</title>
        <authorList>
            <person name="Marks M.E."/>
            <person name="Castro-Rojas C.M."/>
            <person name="Teiling C."/>
            <person name="Du L."/>
            <person name="Kapatral V."/>
            <person name="Walunas T.L."/>
            <person name="Crosson S."/>
        </authorList>
    </citation>
    <scope>NUCLEOTIDE SEQUENCE [LARGE SCALE GENOMIC DNA]</scope>
    <source>
        <strain>NA1000 / CB15N</strain>
    </source>
</reference>
<organism>
    <name type="scientific">Caulobacter vibrioides (strain NA1000 / CB15N)</name>
    <name type="common">Caulobacter crescentus</name>
    <dbReference type="NCBI Taxonomy" id="565050"/>
    <lineage>
        <taxon>Bacteria</taxon>
        <taxon>Pseudomonadati</taxon>
        <taxon>Pseudomonadota</taxon>
        <taxon>Alphaproteobacteria</taxon>
        <taxon>Caulobacterales</taxon>
        <taxon>Caulobacteraceae</taxon>
        <taxon>Caulobacter</taxon>
    </lineage>
</organism>
<name>RL28_CAUVN</name>
<keyword id="KW-1185">Reference proteome</keyword>
<keyword id="KW-0687">Ribonucleoprotein</keyword>
<keyword id="KW-0689">Ribosomal protein</keyword>